<reference key="1">
    <citation type="submission" date="2008-05" db="EMBL/GenBank/DDBJ databases">
        <title>Complete sequence of Shigella boydii serotype 18 strain BS512.</title>
        <authorList>
            <person name="Rasko D.A."/>
            <person name="Rosovitz M."/>
            <person name="Maurelli A.T."/>
            <person name="Myers G."/>
            <person name="Seshadri R."/>
            <person name="Cer R."/>
            <person name="Jiang L."/>
            <person name="Ravel J."/>
            <person name="Sebastian Y."/>
        </authorList>
    </citation>
    <scope>NUCLEOTIDE SEQUENCE [LARGE SCALE GENOMIC DNA]</scope>
    <source>
        <strain>CDC 3083-94 / BS512</strain>
    </source>
</reference>
<comment type="function">
    <text evidence="1">Catalyzes the hydrolysis of N-succinyl-L,L-diaminopimelic acid (SDAP), forming succinate and LL-2,6-diaminopimelate (DAP), an intermediate involved in the bacterial biosynthesis of lysine and meso-diaminopimelic acid, an essential component of bacterial cell walls.</text>
</comment>
<comment type="catalytic activity">
    <reaction evidence="1">
        <text>N-succinyl-(2S,6S)-2,6-diaminopimelate + H2O = (2S,6S)-2,6-diaminopimelate + succinate</text>
        <dbReference type="Rhea" id="RHEA:22608"/>
        <dbReference type="ChEBI" id="CHEBI:15377"/>
        <dbReference type="ChEBI" id="CHEBI:30031"/>
        <dbReference type="ChEBI" id="CHEBI:57609"/>
        <dbReference type="ChEBI" id="CHEBI:58087"/>
        <dbReference type="EC" id="3.5.1.18"/>
    </reaction>
</comment>
<comment type="cofactor">
    <cofactor evidence="1">
        <name>Zn(2+)</name>
        <dbReference type="ChEBI" id="CHEBI:29105"/>
    </cofactor>
    <cofactor evidence="1">
        <name>Co(2+)</name>
        <dbReference type="ChEBI" id="CHEBI:48828"/>
    </cofactor>
    <text evidence="1">Binds 2 Zn(2+) or Co(2+) ions per subunit.</text>
</comment>
<comment type="pathway">
    <text evidence="1">Amino-acid biosynthesis; L-lysine biosynthesis via DAP pathway; LL-2,6-diaminopimelate from (S)-tetrahydrodipicolinate (succinylase route): step 3/3.</text>
</comment>
<comment type="subunit">
    <text evidence="1">Homodimer.</text>
</comment>
<comment type="similarity">
    <text evidence="1">Belongs to the peptidase M20A family. DapE subfamily.</text>
</comment>
<dbReference type="EC" id="3.5.1.18" evidence="1"/>
<dbReference type="EMBL" id="CP001063">
    <property type="protein sequence ID" value="ACD09797.1"/>
    <property type="molecule type" value="Genomic_DNA"/>
</dbReference>
<dbReference type="RefSeq" id="WP_001277803.1">
    <property type="nucleotide sequence ID" value="NC_010658.1"/>
</dbReference>
<dbReference type="SMR" id="B2TXP7"/>
<dbReference type="STRING" id="344609.SbBS512_E2843"/>
<dbReference type="MEROPS" id="M20.010"/>
<dbReference type="KEGG" id="sbc:SbBS512_E2843"/>
<dbReference type="HOGENOM" id="CLU_021802_4_0_6"/>
<dbReference type="UniPathway" id="UPA00034">
    <property type="reaction ID" value="UER00021"/>
</dbReference>
<dbReference type="Proteomes" id="UP000001030">
    <property type="component" value="Chromosome"/>
</dbReference>
<dbReference type="GO" id="GO:0008777">
    <property type="term" value="F:acetylornithine deacetylase activity"/>
    <property type="evidence" value="ECO:0007669"/>
    <property type="project" value="TreeGrafter"/>
</dbReference>
<dbReference type="GO" id="GO:0050897">
    <property type="term" value="F:cobalt ion binding"/>
    <property type="evidence" value="ECO:0007669"/>
    <property type="project" value="UniProtKB-UniRule"/>
</dbReference>
<dbReference type="GO" id="GO:0009014">
    <property type="term" value="F:succinyl-diaminopimelate desuccinylase activity"/>
    <property type="evidence" value="ECO:0007669"/>
    <property type="project" value="UniProtKB-UniRule"/>
</dbReference>
<dbReference type="GO" id="GO:0008270">
    <property type="term" value="F:zinc ion binding"/>
    <property type="evidence" value="ECO:0007669"/>
    <property type="project" value="UniProtKB-UniRule"/>
</dbReference>
<dbReference type="GO" id="GO:0019877">
    <property type="term" value="P:diaminopimelate biosynthetic process"/>
    <property type="evidence" value="ECO:0007669"/>
    <property type="project" value="UniProtKB-UniRule"/>
</dbReference>
<dbReference type="GO" id="GO:0006526">
    <property type="term" value="P:L-arginine biosynthetic process"/>
    <property type="evidence" value="ECO:0007669"/>
    <property type="project" value="TreeGrafter"/>
</dbReference>
<dbReference type="GO" id="GO:0009089">
    <property type="term" value="P:lysine biosynthetic process via diaminopimelate"/>
    <property type="evidence" value="ECO:0007669"/>
    <property type="project" value="UniProtKB-UniRule"/>
</dbReference>
<dbReference type="CDD" id="cd03891">
    <property type="entry name" value="M20_DapE_proteobac"/>
    <property type="match status" value="1"/>
</dbReference>
<dbReference type="FunFam" id="3.30.70.360:FF:000011">
    <property type="entry name" value="Succinyl-diaminopimelate desuccinylase"/>
    <property type="match status" value="1"/>
</dbReference>
<dbReference type="FunFam" id="3.40.630.10:FF:000005">
    <property type="entry name" value="Succinyl-diaminopimelate desuccinylase"/>
    <property type="match status" value="1"/>
</dbReference>
<dbReference type="FunFam" id="3.40.630.10:FF:000010">
    <property type="entry name" value="Succinyl-diaminopimelate desuccinylase"/>
    <property type="match status" value="1"/>
</dbReference>
<dbReference type="Gene3D" id="3.40.630.10">
    <property type="entry name" value="Zn peptidases"/>
    <property type="match status" value="2"/>
</dbReference>
<dbReference type="HAMAP" id="MF_01690">
    <property type="entry name" value="DapE"/>
    <property type="match status" value="1"/>
</dbReference>
<dbReference type="InterPro" id="IPR001261">
    <property type="entry name" value="ArgE/DapE_CS"/>
</dbReference>
<dbReference type="InterPro" id="IPR036264">
    <property type="entry name" value="Bact_exopeptidase_dim_dom"/>
</dbReference>
<dbReference type="InterPro" id="IPR005941">
    <property type="entry name" value="DapE_proteobac"/>
</dbReference>
<dbReference type="InterPro" id="IPR002933">
    <property type="entry name" value="Peptidase_M20"/>
</dbReference>
<dbReference type="InterPro" id="IPR011650">
    <property type="entry name" value="Peptidase_M20_dimer"/>
</dbReference>
<dbReference type="InterPro" id="IPR050072">
    <property type="entry name" value="Peptidase_M20A"/>
</dbReference>
<dbReference type="NCBIfam" id="TIGR01246">
    <property type="entry name" value="dapE_proteo"/>
    <property type="match status" value="1"/>
</dbReference>
<dbReference type="NCBIfam" id="NF009557">
    <property type="entry name" value="PRK13009.1"/>
    <property type="match status" value="1"/>
</dbReference>
<dbReference type="PANTHER" id="PTHR43808">
    <property type="entry name" value="ACETYLORNITHINE DEACETYLASE"/>
    <property type="match status" value="1"/>
</dbReference>
<dbReference type="PANTHER" id="PTHR43808:SF31">
    <property type="entry name" value="N-ACETYL-L-CITRULLINE DEACETYLASE"/>
    <property type="match status" value="1"/>
</dbReference>
<dbReference type="Pfam" id="PF07687">
    <property type="entry name" value="M20_dimer"/>
    <property type="match status" value="1"/>
</dbReference>
<dbReference type="Pfam" id="PF01546">
    <property type="entry name" value="Peptidase_M20"/>
    <property type="match status" value="1"/>
</dbReference>
<dbReference type="SUPFAM" id="SSF55031">
    <property type="entry name" value="Bacterial exopeptidase dimerisation domain"/>
    <property type="match status" value="1"/>
</dbReference>
<dbReference type="SUPFAM" id="SSF53187">
    <property type="entry name" value="Zn-dependent exopeptidases"/>
    <property type="match status" value="1"/>
</dbReference>
<dbReference type="PROSITE" id="PS00758">
    <property type="entry name" value="ARGE_DAPE_CPG2_1"/>
    <property type="match status" value="1"/>
</dbReference>
<dbReference type="PROSITE" id="PS00759">
    <property type="entry name" value="ARGE_DAPE_CPG2_2"/>
    <property type="match status" value="1"/>
</dbReference>
<accession>B2TXP7</accession>
<keyword id="KW-0028">Amino-acid biosynthesis</keyword>
<keyword id="KW-0170">Cobalt</keyword>
<keyword id="KW-0220">Diaminopimelate biosynthesis</keyword>
<keyword id="KW-0378">Hydrolase</keyword>
<keyword id="KW-0457">Lysine biosynthesis</keyword>
<keyword id="KW-0479">Metal-binding</keyword>
<keyword id="KW-1185">Reference proteome</keyword>
<keyword id="KW-0862">Zinc</keyword>
<proteinExistence type="inferred from homology"/>
<feature type="chain" id="PRO_0000375745" description="Succinyl-diaminopimelate desuccinylase">
    <location>
        <begin position="1"/>
        <end position="375"/>
    </location>
</feature>
<feature type="active site" evidence="1">
    <location>
        <position position="68"/>
    </location>
</feature>
<feature type="active site" description="Proton acceptor" evidence="1">
    <location>
        <position position="133"/>
    </location>
</feature>
<feature type="binding site" evidence="1">
    <location>
        <position position="66"/>
    </location>
    <ligand>
        <name>Zn(2+)</name>
        <dbReference type="ChEBI" id="CHEBI:29105"/>
        <label>1</label>
    </ligand>
</feature>
<feature type="binding site" evidence="1">
    <location>
        <position position="99"/>
    </location>
    <ligand>
        <name>Zn(2+)</name>
        <dbReference type="ChEBI" id="CHEBI:29105"/>
        <label>1</label>
    </ligand>
</feature>
<feature type="binding site" evidence="1">
    <location>
        <position position="99"/>
    </location>
    <ligand>
        <name>Zn(2+)</name>
        <dbReference type="ChEBI" id="CHEBI:29105"/>
        <label>2</label>
    </ligand>
</feature>
<feature type="binding site" evidence="1">
    <location>
        <position position="134"/>
    </location>
    <ligand>
        <name>Zn(2+)</name>
        <dbReference type="ChEBI" id="CHEBI:29105"/>
        <label>2</label>
    </ligand>
</feature>
<feature type="binding site" evidence="1">
    <location>
        <position position="162"/>
    </location>
    <ligand>
        <name>Zn(2+)</name>
        <dbReference type="ChEBI" id="CHEBI:29105"/>
        <label>1</label>
    </ligand>
</feature>
<feature type="binding site" evidence="1">
    <location>
        <position position="348"/>
    </location>
    <ligand>
        <name>Zn(2+)</name>
        <dbReference type="ChEBI" id="CHEBI:29105"/>
        <label>2</label>
    </ligand>
</feature>
<name>DAPE_SHIB3</name>
<protein>
    <recommendedName>
        <fullName evidence="1">Succinyl-diaminopimelate desuccinylase</fullName>
        <shortName evidence="1">SDAP desuccinylase</shortName>
        <ecNumber evidence="1">3.5.1.18</ecNumber>
    </recommendedName>
    <alternativeName>
        <fullName evidence="1">N-succinyl-LL-2,6-diaminoheptanedioate amidohydrolase</fullName>
    </alternativeName>
</protein>
<gene>
    <name evidence="1" type="primary">dapE</name>
    <name type="ordered locus">SbBS512_E2843</name>
</gene>
<organism>
    <name type="scientific">Shigella boydii serotype 18 (strain CDC 3083-94 / BS512)</name>
    <dbReference type="NCBI Taxonomy" id="344609"/>
    <lineage>
        <taxon>Bacteria</taxon>
        <taxon>Pseudomonadati</taxon>
        <taxon>Pseudomonadota</taxon>
        <taxon>Gammaproteobacteria</taxon>
        <taxon>Enterobacterales</taxon>
        <taxon>Enterobacteriaceae</taxon>
        <taxon>Shigella</taxon>
    </lineage>
</organism>
<sequence length="375" mass="41299">MSCPVIELTQQLIRRPSLSPDDAGCQALLIERLQAIGFTVERMDFADTQNFWAWRGQGETLAFAGHTDVVPPGDADRWINPPFEPTIRDGMLFGRGAADMKGSLAAMVVAAERFVAQHPNHTGRLAFLITSDEEASAHNGTVKVVEALMARNERLDYCLVGEPSSIEVVGDVVKNGRRGSLTCNLTIHGVQGHVAYPHLADNPVHRAAPFLNELVAIEWDQGNEFFPATSMQIANIQAGTGSNNVIPGELFVQFNFRFSTELTDEMIKAQVLALLEKHQLRYTVDWWLSGQPFLTARGKLVDAVVNAVEHYNEIKPQLLTTGGTSDGRFIARMGAQVVELGPVNATIHKINECVNTADLQLLARMYQRIMEQLVA</sequence>
<evidence type="ECO:0000255" key="1">
    <source>
        <dbReference type="HAMAP-Rule" id="MF_01690"/>
    </source>
</evidence>